<evidence type="ECO:0000250" key="1"/>
<evidence type="ECO:0000255" key="2"/>
<evidence type="ECO:0000305" key="3"/>
<organism>
    <name type="scientific">Komagataella pastoris</name>
    <name type="common">Yeast</name>
    <name type="synonym">Pichia pastoris</name>
    <dbReference type="NCBI Taxonomy" id="4922"/>
    <lineage>
        <taxon>Eukaryota</taxon>
        <taxon>Fungi</taxon>
        <taxon>Dikarya</taxon>
        <taxon>Ascomycota</taxon>
        <taxon>Saccharomycotina</taxon>
        <taxon>Pichiomycetes</taxon>
        <taxon>Pichiales</taxon>
        <taxon>Pichiaceae</taxon>
        <taxon>Komagataella</taxon>
    </lineage>
</organism>
<keyword id="KW-0449">Lipoprotein</keyword>
<keyword id="KW-0472">Membrane</keyword>
<keyword id="KW-0519">Myristate</keyword>
<keyword id="KW-0564">Palmitate</keyword>
<keyword id="KW-0677">Repeat</keyword>
<keyword id="KW-0926">Vacuole</keyword>
<accession>Q5EFZ4</accession>
<reference key="1">
    <citation type="submission" date="2005-01" db="EMBL/GenBank/DDBJ databases">
        <authorList>
            <person name="Thomson M."/>
            <person name="Dunn W.A. Jr."/>
        </authorList>
    </citation>
    <scope>NUCLEOTIDE SEQUENCE [GENOMIC DNA]</scope>
</reference>
<comment type="function">
    <text evidence="1">Functions in both vacuole inheritance and protein targeting from the cytoplasm to vacuole.</text>
</comment>
<comment type="subcellular location">
    <subcellularLocation>
        <location evidence="1">Vacuole membrane</location>
        <topology evidence="1">Lipid-anchor</topology>
    </subcellularLocation>
</comment>
<comment type="similarity">
    <text evidence="3">Belongs to the beta-catenin family.</text>
</comment>
<name>VAC8_PICPA</name>
<proteinExistence type="inferred from homology"/>
<sequence length="556" mass="60725">MGVCCSCFKRYEHDQSYPPLLAENEREAISSLLQYLENRSEVDFFTDGPLRALSTLVYSENIDLQRSAALAFAEVTEKDVRPVTRDVLEPILILLQSSDAEVQRAACAALGNLAVNDSNKVLIVNMGGLEPLIRQMMSPNIEVQCNAVGCITNLATQDQNKSKIATSGALIPLTKLAKSKDLRVQRNATGALLNMTHSLENRQELVNAGSVPILVQLLSSTDPDVQYYCTTALSNIAVDEGNRKKLASTEPKLISQLVQLMDSTSPRVQCQATLALRNLASDANYQLEIVRAGGLPNLVTLLNSTHQPLVLAAVACIRNISIHPLNEALIIDAGFLKPLVSLLDYNDNVEIQCHAVSTLRNLAASSERNRLALLESGAVEKCEKLVLNSPISVQSEISACFAILALADDLKMKLLDSNIIEVLLPLTSSENGEVCGNAAAALANLCSRIPDYTIILKNYEQISKFIAKFLNSQNPTFEHIALWTTLQLLESEDETIKAKLKKQINSGEISLNNLTTSTLNNHSDTSNIINNDGEEGEFNDGDDIINLTQQILEMIK</sequence>
<feature type="initiator methionine" description="Removed" evidence="1">
    <location>
        <position position="1"/>
    </location>
</feature>
<feature type="chain" id="PRO_0000256216" description="Vacuolar protein 8">
    <location>
        <begin position="2"/>
        <end position="556"/>
    </location>
</feature>
<feature type="repeat" description="ARM 1">
    <location>
        <begin position="38"/>
        <end position="74"/>
    </location>
</feature>
<feature type="repeat" description="ARM 2">
    <location>
        <begin position="75"/>
        <end position="115"/>
    </location>
</feature>
<feature type="repeat" description="ARM 3">
    <location>
        <begin position="117"/>
        <end position="156"/>
    </location>
</feature>
<feature type="repeat" description="ARM 4">
    <location>
        <begin position="158"/>
        <end position="197"/>
    </location>
</feature>
<feature type="repeat" description="ARM 5">
    <location>
        <begin position="199"/>
        <end position="238"/>
    </location>
</feature>
<feature type="repeat" description="ARM 6">
    <location>
        <begin position="242"/>
        <end position="281"/>
    </location>
</feature>
<feature type="repeat" description="ARM 7">
    <location>
        <begin position="283"/>
        <end position="322"/>
    </location>
</feature>
<feature type="repeat" description="ARM 8">
    <location>
        <begin position="324"/>
        <end position="364"/>
    </location>
</feature>
<feature type="repeat" description="ARM 9">
    <location>
        <begin position="408"/>
        <end position="447"/>
    </location>
</feature>
<feature type="lipid moiety-binding region" description="N-myristoyl glycine" evidence="1">
    <location>
        <position position="2"/>
    </location>
</feature>
<feature type="lipid moiety-binding region" description="S-palmitoyl cysteine" evidence="2">
    <location>
        <position position="4"/>
    </location>
</feature>
<feature type="lipid moiety-binding region" description="S-palmitoyl cysteine" evidence="2">
    <location>
        <position position="5"/>
    </location>
</feature>
<feature type="lipid moiety-binding region" description="S-palmitoyl cysteine" evidence="2">
    <location>
        <position position="7"/>
    </location>
</feature>
<dbReference type="EMBL" id="AY886543">
    <property type="protein sequence ID" value="AAW78365.1"/>
    <property type="molecule type" value="Genomic_DNA"/>
</dbReference>
<dbReference type="SMR" id="Q5EFZ4"/>
<dbReference type="OrthoDB" id="7537227at2759"/>
<dbReference type="GO" id="GO:0000329">
    <property type="term" value="C:fungal-type vacuole membrane"/>
    <property type="evidence" value="ECO:0007669"/>
    <property type="project" value="TreeGrafter"/>
</dbReference>
<dbReference type="GO" id="GO:0043495">
    <property type="term" value="F:protein-membrane adaptor activity"/>
    <property type="evidence" value="ECO:0007669"/>
    <property type="project" value="InterPro"/>
</dbReference>
<dbReference type="GO" id="GO:0000045">
    <property type="term" value="P:autophagosome assembly"/>
    <property type="evidence" value="ECO:0007669"/>
    <property type="project" value="TreeGrafter"/>
</dbReference>
<dbReference type="GO" id="GO:0071562">
    <property type="term" value="P:nucleus-vacuole junction assembly"/>
    <property type="evidence" value="ECO:0007669"/>
    <property type="project" value="InterPro"/>
</dbReference>
<dbReference type="FunFam" id="1.25.10.10:FF:000131">
    <property type="entry name" value="Vacuolar protein 8"/>
    <property type="match status" value="1"/>
</dbReference>
<dbReference type="Gene3D" id="1.25.10.10">
    <property type="entry name" value="Leucine-rich Repeat Variant"/>
    <property type="match status" value="2"/>
</dbReference>
<dbReference type="InterPro" id="IPR011989">
    <property type="entry name" value="ARM-like"/>
</dbReference>
<dbReference type="InterPro" id="IPR016024">
    <property type="entry name" value="ARM-type_fold"/>
</dbReference>
<dbReference type="InterPro" id="IPR000225">
    <property type="entry name" value="Armadillo"/>
</dbReference>
<dbReference type="InterPro" id="IPR045156">
    <property type="entry name" value="Vac8"/>
</dbReference>
<dbReference type="PANTHER" id="PTHR47249">
    <property type="entry name" value="VACUOLAR PROTEIN 8"/>
    <property type="match status" value="1"/>
</dbReference>
<dbReference type="PANTHER" id="PTHR47249:SF1">
    <property type="entry name" value="VACUOLAR PROTEIN 8"/>
    <property type="match status" value="1"/>
</dbReference>
<dbReference type="Pfam" id="PF00514">
    <property type="entry name" value="Arm"/>
    <property type="match status" value="7"/>
</dbReference>
<dbReference type="Pfam" id="PF13513">
    <property type="entry name" value="HEAT_EZ"/>
    <property type="match status" value="1"/>
</dbReference>
<dbReference type="SMART" id="SM00185">
    <property type="entry name" value="ARM"/>
    <property type="match status" value="9"/>
</dbReference>
<dbReference type="SUPFAM" id="SSF48371">
    <property type="entry name" value="ARM repeat"/>
    <property type="match status" value="1"/>
</dbReference>
<dbReference type="PROSITE" id="PS50176">
    <property type="entry name" value="ARM_REPEAT"/>
    <property type="match status" value="7"/>
</dbReference>
<gene>
    <name type="primary">VAC8</name>
</gene>
<protein>
    <recommendedName>
        <fullName>Vacuolar protein 8</fullName>
    </recommendedName>
</protein>